<name>PDXH_RHORT</name>
<dbReference type="EC" id="1.4.3.5" evidence="1"/>
<dbReference type="EMBL" id="CP000230">
    <property type="protein sequence ID" value="ABC23424.1"/>
    <property type="molecule type" value="Genomic_DNA"/>
</dbReference>
<dbReference type="RefSeq" id="WP_011390377.1">
    <property type="nucleotide sequence ID" value="NC_007643.1"/>
</dbReference>
<dbReference type="RefSeq" id="YP_427711.1">
    <property type="nucleotide sequence ID" value="NC_007643.1"/>
</dbReference>
<dbReference type="SMR" id="Q2RR21"/>
<dbReference type="STRING" id="269796.Rru_A2627"/>
<dbReference type="EnsemblBacteria" id="ABC23424">
    <property type="protein sequence ID" value="ABC23424"/>
    <property type="gene ID" value="Rru_A2627"/>
</dbReference>
<dbReference type="KEGG" id="rru:Rru_A2627"/>
<dbReference type="PATRIC" id="fig|269796.9.peg.2737"/>
<dbReference type="eggNOG" id="COG0259">
    <property type="taxonomic scope" value="Bacteria"/>
</dbReference>
<dbReference type="HOGENOM" id="CLU_032263_2_2_5"/>
<dbReference type="PhylomeDB" id="Q2RR21"/>
<dbReference type="UniPathway" id="UPA01068">
    <property type="reaction ID" value="UER00304"/>
</dbReference>
<dbReference type="UniPathway" id="UPA01068">
    <property type="reaction ID" value="UER00305"/>
</dbReference>
<dbReference type="Proteomes" id="UP000001929">
    <property type="component" value="Chromosome"/>
</dbReference>
<dbReference type="GO" id="GO:0010181">
    <property type="term" value="F:FMN binding"/>
    <property type="evidence" value="ECO:0007669"/>
    <property type="project" value="UniProtKB-UniRule"/>
</dbReference>
<dbReference type="GO" id="GO:0004733">
    <property type="term" value="F:pyridoxamine phosphate oxidase activity"/>
    <property type="evidence" value="ECO:0007669"/>
    <property type="project" value="UniProtKB-UniRule"/>
</dbReference>
<dbReference type="GO" id="GO:0008615">
    <property type="term" value="P:pyridoxine biosynthetic process"/>
    <property type="evidence" value="ECO:0007669"/>
    <property type="project" value="UniProtKB-KW"/>
</dbReference>
<dbReference type="Gene3D" id="2.30.110.10">
    <property type="entry name" value="Electron Transport, Fmn-binding Protein, Chain A"/>
    <property type="match status" value="1"/>
</dbReference>
<dbReference type="HAMAP" id="MF_01629">
    <property type="entry name" value="PdxH"/>
    <property type="match status" value="1"/>
</dbReference>
<dbReference type="InterPro" id="IPR000659">
    <property type="entry name" value="Pyridox_Oxase"/>
</dbReference>
<dbReference type="InterPro" id="IPR019740">
    <property type="entry name" value="Pyridox_Oxase_CS"/>
</dbReference>
<dbReference type="InterPro" id="IPR011576">
    <property type="entry name" value="Pyridox_Oxase_N"/>
</dbReference>
<dbReference type="InterPro" id="IPR019576">
    <property type="entry name" value="Pyridoxamine_oxidase_dimer_C"/>
</dbReference>
<dbReference type="InterPro" id="IPR012349">
    <property type="entry name" value="Split_barrel_FMN-bd"/>
</dbReference>
<dbReference type="NCBIfam" id="TIGR00558">
    <property type="entry name" value="pdxH"/>
    <property type="match status" value="1"/>
</dbReference>
<dbReference type="NCBIfam" id="NF004231">
    <property type="entry name" value="PRK05679.1"/>
    <property type="match status" value="1"/>
</dbReference>
<dbReference type="PANTHER" id="PTHR10851:SF0">
    <property type="entry name" value="PYRIDOXINE-5'-PHOSPHATE OXIDASE"/>
    <property type="match status" value="1"/>
</dbReference>
<dbReference type="PANTHER" id="PTHR10851">
    <property type="entry name" value="PYRIDOXINE-5-PHOSPHATE OXIDASE"/>
    <property type="match status" value="1"/>
</dbReference>
<dbReference type="Pfam" id="PF10590">
    <property type="entry name" value="PNP_phzG_C"/>
    <property type="match status" value="1"/>
</dbReference>
<dbReference type="Pfam" id="PF01243">
    <property type="entry name" value="PNPOx_N"/>
    <property type="match status" value="1"/>
</dbReference>
<dbReference type="PIRSF" id="PIRSF000190">
    <property type="entry name" value="Pyd_amn-ph_oxd"/>
    <property type="match status" value="1"/>
</dbReference>
<dbReference type="SUPFAM" id="SSF50475">
    <property type="entry name" value="FMN-binding split barrel"/>
    <property type="match status" value="1"/>
</dbReference>
<dbReference type="PROSITE" id="PS01064">
    <property type="entry name" value="PYRIDOX_OXIDASE"/>
    <property type="match status" value="1"/>
</dbReference>
<feature type="chain" id="PRO_0000255886" description="Pyridoxine/pyridoxamine 5'-phosphate oxidase">
    <location>
        <begin position="1"/>
        <end position="201"/>
    </location>
</feature>
<feature type="binding site" evidence="1">
    <location>
        <begin position="45"/>
        <end position="50"/>
    </location>
    <ligand>
        <name>FMN</name>
        <dbReference type="ChEBI" id="CHEBI:58210"/>
    </ligand>
</feature>
<feature type="binding site" evidence="1">
    <location>
        <position position="50"/>
    </location>
    <ligand>
        <name>substrate</name>
    </ligand>
</feature>
<feature type="binding site" evidence="1">
    <location>
        <begin position="65"/>
        <end position="66"/>
    </location>
    <ligand>
        <name>FMN</name>
        <dbReference type="ChEBI" id="CHEBI:58210"/>
    </ligand>
</feature>
<feature type="binding site" evidence="1">
    <location>
        <position position="71"/>
    </location>
    <ligand>
        <name>FMN</name>
        <dbReference type="ChEBI" id="CHEBI:58210"/>
    </ligand>
</feature>
<feature type="binding site" evidence="1">
    <location>
        <position position="72"/>
    </location>
    <ligand>
        <name>FMN</name>
        <dbReference type="ChEBI" id="CHEBI:58210"/>
    </ligand>
</feature>
<feature type="binding site" evidence="1">
    <location>
        <position position="94"/>
    </location>
    <ligand>
        <name>FMN</name>
        <dbReference type="ChEBI" id="CHEBI:58210"/>
    </ligand>
</feature>
<feature type="binding site" evidence="1">
    <location>
        <position position="112"/>
    </location>
    <ligand>
        <name>substrate</name>
    </ligand>
</feature>
<feature type="binding site" evidence="1">
    <location>
        <position position="116"/>
    </location>
    <ligand>
        <name>substrate</name>
    </ligand>
</feature>
<feature type="binding site" evidence="1">
    <location>
        <position position="120"/>
    </location>
    <ligand>
        <name>substrate</name>
    </ligand>
</feature>
<feature type="binding site" evidence="1">
    <location>
        <begin position="129"/>
        <end position="130"/>
    </location>
    <ligand>
        <name>FMN</name>
        <dbReference type="ChEBI" id="CHEBI:58210"/>
    </ligand>
</feature>
<feature type="binding site" evidence="1">
    <location>
        <position position="174"/>
    </location>
    <ligand>
        <name>FMN</name>
        <dbReference type="ChEBI" id="CHEBI:58210"/>
    </ligand>
</feature>
<feature type="binding site" evidence="1">
    <location>
        <begin position="180"/>
        <end position="182"/>
    </location>
    <ligand>
        <name>substrate</name>
    </ligand>
</feature>
<feature type="binding site" evidence="1">
    <location>
        <position position="184"/>
    </location>
    <ligand>
        <name>FMN</name>
        <dbReference type="ChEBI" id="CHEBI:58210"/>
    </ligand>
</feature>
<reference key="1">
    <citation type="journal article" date="2011" name="Stand. Genomic Sci.">
        <title>Complete genome sequence of Rhodospirillum rubrum type strain (S1).</title>
        <authorList>
            <person name="Munk A.C."/>
            <person name="Copeland A."/>
            <person name="Lucas S."/>
            <person name="Lapidus A."/>
            <person name="Del Rio T.G."/>
            <person name="Barry K."/>
            <person name="Detter J.C."/>
            <person name="Hammon N."/>
            <person name="Israni S."/>
            <person name="Pitluck S."/>
            <person name="Brettin T."/>
            <person name="Bruce D."/>
            <person name="Han C."/>
            <person name="Tapia R."/>
            <person name="Gilna P."/>
            <person name="Schmutz J."/>
            <person name="Larimer F."/>
            <person name="Land M."/>
            <person name="Kyrpides N.C."/>
            <person name="Mavromatis K."/>
            <person name="Richardson P."/>
            <person name="Rohde M."/>
            <person name="Goeker M."/>
            <person name="Klenk H.P."/>
            <person name="Zhang Y."/>
            <person name="Roberts G.P."/>
            <person name="Reslewic S."/>
            <person name="Schwartz D.C."/>
        </authorList>
    </citation>
    <scope>NUCLEOTIDE SEQUENCE [LARGE SCALE GENOMIC DNA]</scope>
    <source>
        <strain>ATCC 11170 / ATH 1.1.1 / DSM 467 / LMG 4362 / NCIMB 8255 / S1</strain>
    </source>
</reference>
<comment type="function">
    <text evidence="1">Catalyzes the oxidation of either pyridoxine 5'-phosphate (PNP) or pyridoxamine 5'-phosphate (PMP) into pyridoxal 5'-phosphate (PLP).</text>
</comment>
<comment type="catalytic activity">
    <reaction evidence="1">
        <text>pyridoxamine 5'-phosphate + O2 + H2O = pyridoxal 5'-phosphate + H2O2 + NH4(+)</text>
        <dbReference type="Rhea" id="RHEA:15817"/>
        <dbReference type="ChEBI" id="CHEBI:15377"/>
        <dbReference type="ChEBI" id="CHEBI:15379"/>
        <dbReference type="ChEBI" id="CHEBI:16240"/>
        <dbReference type="ChEBI" id="CHEBI:28938"/>
        <dbReference type="ChEBI" id="CHEBI:58451"/>
        <dbReference type="ChEBI" id="CHEBI:597326"/>
        <dbReference type="EC" id="1.4.3.5"/>
    </reaction>
</comment>
<comment type="catalytic activity">
    <reaction evidence="1">
        <text>pyridoxine 5'-phosphate + O2 = pyridoxal 5'-phosphate + H2O2</text>
        <dbReference type="Rhea" id="RHEA:15149"/>
        <dbReference type="ChEBI" id="CHEBI:15379"/>
        <dbReference type="ChEBI" id="CHEBI:16240"/>
        <dbReference type="ChEBI" id="CHEBI:58589"/>
        <dbReference type="ChEBI" id="CHEBI:597326"/>
        <dbReference type="EC" id="1.4.3.5"/>
    </reaction>
</comment>
<comment type="cofactor">
    <cofactor evidence="1">
        <name>FMN</name>
        <dbReference type="ChEBI" id="CHEBI:58210"/>
    </cofactor>
    <text evidence="1">Binds 1 FMN per subunit.</text>
</comment>
<comment type="pathway">
    <text evidence="1">Cofactor metabolism; pyridoxal 5'-phosphate salvage; pyridoxal 5'-phosphate from pyridoxamine 5'-phosphate: step 1/1.</text>
</comment>
<comment type="pathway">
    <text evidence="1">Cofactor metabolism; pyridoxal 5'-phosphate salvage; pyridoxal 5'-phosphate from pyridoxine 5'-phosphate: step 1/1.</text>
</comment>
<comment type="subunit">
    <text evidence="1">Homodimer.</text>
</comment>
<comment type="similarity">
    <text evidence="1">Belongs to the pyridoxamine 5'-phosphate oxidase family.</text>
</comment>
<proteinExistence type="inferred from homology"/>
<sequence>MSSLEDRDPYALFAEWLEEAGTTEPNDPNAMALATCTPEGRPSLRMVLLKGVIAQADAEGGFIFYTNLESRKGGELLANPHAALCFHWKSLRRQVRVEGPVVAVSDAEADAYFASRHRDSRIGAWASMQSRPLQGRFELERRVAQFAARYAVGAVPRPPHWSGFRVVPEVIEFWHDRPFRLHDRVVYRSEGSGWTHSRLYP</sequence>
<organism>
    <name type="scientific">Rhodospirillum rubrum (strain ATCC 11170 / ATH 1.1.1 / DSM 467 / LMG 4362 / NCIMB 8255 / S1)</name>
    <dbReference type="NCBI Taxonomy" id="269796"/>
    <lineage>
        <taxon>Bacteria</taxon>
        <taxon>Pseudomonadati</taxon>
        <taxon>Pseudomonadota</taxon>
        <taxon>Alphaproteobacteria</taxon>
        <taxon>Rhodospirillales</taxon>
        <taxon>Rhodospirillaceae</taxon>
        <taxon>Rhodospirillum</taxon>
    </lineage>
</organism>
<protein>
    <recommendedName>
        <fullName evidence="1">Pyridoxine/pyridoxamine 5'-phosphate oxidase</fullName>
        <ecNumber evidence="1">1.4.3.5</ecNumber>
    </recommendedName>
    <alternativeName>
        <fullName evidence="1">PNP/PMP oxidase</fullName>
        <shortName evidence="1">PNPOx</shortName>
    </alternativeName>
    <alternativeName>
        <fullName evidence="1">Pyridoxal 5'-phosphate synthase</fullName>
    </alternativeName>
</protein>
<keyword id="KW-0285">Flavoprotein</keyword>
<keyword id="KW-0288">FMN</keyword>
<keyword id="KW-0560">Oxidoreductase</keyword>
<keyword id="KW-0664">Pyridoxine biosynthesis</keyword>
<keyword id="KW-1185">Reference proteome</keyword>
<gene>
    <name evidence="1" type="primary">pdxH</name>
    <name type="ordered locus">Rru_A2627</name>
</gene>
<evidence type="ECO:0000255" key="1">
    <source>
        <dbReference type="HAMAP-Rule" id="MF_01629"/>
    </source>
</evidence>
<accession>Q2RR21</accession>